<reference key="1">
    <citation type="submission" date="2001-09" db="EMBL/GenBank/DDBJ databases">
        <authorList>
            <person name="Mukherjee K."/>
            <person name="Wang Y."/>
            <person name="Suedhof T.C."/>
        </authorList>
    </citation>
    <scope>NUCLEOTIDE SEQUENCE [MRNA]</scope>
    <source>
        <strain>Sprague-Dawley</strain>
        <tissue>Brain</tissue>
    </source>
</reference>
<reference key="2">
    <citation type="journal article" date="2002" name="Nature">
        <title>RIM1alpha forms a protein scaffold for regulating neurotransmitter release at the active zone.</title>
        <authorList>
            <person name="Schoch S."/>
            <person name="Castillo P.E."/>
            <person name="Jo T."/>
            <person name="Mukherjee K."/>
            <person name="Geppert M."/>
            <person name="Wang Y."/>
            <person name="Schmitz F."/>
            <person name="Malenka R.C."/>
            <person name="Suedhof T.C."/>
        </authorList>
    </citation>
    <scope>INTERACTION WITH RIMS1 AND RIMS2</scope>
    <source>
        <tissue>Brain</tissue>
    </source>
</reference>
<reference key="3">
    <citation type="journal article" date="2002" name="Neuron">
        <title>Interaction between GRIP and liprin-alpha/SYD2 is required for AMPA receptor targeting.</title>
        <authorList>
            <person name="Wyszynski M."/>
            <person name="Kim E."/>
            <person name="Dunah A.W."/>
            <person name="Passafaro M."/>
            <person name="Valtschanoff J.G."/>
            <person name="Serra-Pages C."/>
            <person name="Streuli M."/>
            <person name="Weinberg R.J."/>
            <person name="Sheng M."/>
        </authorList>
    </citation>
    <scope>INTERACTION WITH GRIP1</scope>
</reference>
<reference key="4">
    <citation type="journal article" date="2003" name="J. Neurosci.">
        <title>Interaction between liprin-alpha and GIT1 is required for AMPA receptor targeting.</title>
        <authorList>
            <person name="Ko J."/>
            <person name="Kim S."/>
            <person name="Valtschanoff J.G."/>
            <person name="Shin H."/>
            <person name="Lee J.R."/>
            <person name="Sheng M."/>
            <person name="Premont R.T."/>
            <person name="Weinberg R.J."/>
            <person name="Kim E."/>
        </authorList>
    </citation>
    <scope>INTERACTION WITH GIT1 AND GIT2</scope>
</reference>
<reference key="5">
    <citation type="journal article" date="2003" name="J. Biol. Chem.">
        <title>Association of the kinesin motor KIF1A with the multimodular protein liprin-alpha.</title>
        <authorList>
            <person name="Shin H."/>
            <person name="Wyszynski M."/>
            <person name="Huh K.H."/>
            <person name="Valtschanoff J.G."/>
            <person name="Lee J.R."/>
            <person name="Ko J."/>
            <person name="Streuli M."/>
            <person name="Weinberg R.J."/>
            <person name="Sheng M."/>
            <person name="Kim E."/>
        </authorList>
    </citation>
    <scope>INTERACTION WITH KIF1A</scope>
</reference>
<reference key="6">
    <citation type="journal article" date="2012" name="Nat. Commun.">
        <title>Quantitative maps of protein phosphorylation sites across 14 different rat organs and tissues.</title>
        <authorList>
            <person name="Lundby A."/>
            <person name="Secher A."/>
            <person name="Lage K."/>
            <person name="Nordsborg N.B."/>
            <person name="Dmytriyev A."/>
            <person name="Lundby C."/>
            <person name="Olsen J.V."/>
        </authorList>
    </citation>
    <scope>PHOSPHORYLATION [LARGE SCALE ANALYSIS] AT SER-500 AND SER-541</scope>
    <scope>IDENTIFICATION BY MASS SPECTROMETRY [LARGE SCALE ANALYSIS]</scope>
</reference>
<keyword id="KW-0175">Coiled coil</keyword>
<keyword id="KW-0963">Cytoplasm</keyword>
<keyword id="KW-0597">Phosphoprotein</keyword>
<keyword id="KW-1185">Reference proteome</keyword>
<keyword id="KW-0677">Repeat</keyword>
<sequence length="1043" mass="118004">DVSSEVEVLKALKSLFEHHKALDEKVRERLRAALERVTTLEEQLAGAHQQVSALQQGAGIRDGVAEEEETVDLGPKRLWKDDTGRVEELQGLLEKQNYELSQARERLVTLSATVTELEEDLGTARRDLIKSEELSGKHQRDLREALAQKEDMEERITTLEKRYLAAQREATSIHDLNDKLENELANKESLHRQCEEKARHLQELLEVAEQKLQQTMRKAETLPEVEAELSQRIAALTKAEERHGNIEEHLRQLEGQLEEKNQELARVRQREKMNEDHNKRLSDTVDRLLSESNERLQLHLKERMAALEEKGRLSEEIEKLRQEVDQLKGRGGPFVDGIHSRSHVGSTTDVRFSLSTAAHVPPGLHRRYTALREESAKDWKPAPLPGVLAATTTPALTVTLRSPMWTRMSLGAWWALRLMSSHLVAILDAQTLAMMLQEQLDAINQEIRMIQEEKESTELRAEEIETRVTSGSMEALNLTQLRKRGSIPTSLTALSLASASPPLSGRSTPKLTSRSAAQDLDRMGVMTLPSDLRKHRRKLLSPVSREENREDKATIKCETSPPSSPRTLRLEKLGHPTLSQEEGKSALEGQDSNPSSSNSSQDSLHKGAKRKGIKSSIGRLFGKKEKGRLIHLSRDATGHVLLTDSELSLQEPMVPAKLGTQAEKDRRLKKKHQLLEDARRKGMPFAQWDGPTVVSWLELWVGMPAWYVAACRANVKSGAIMSALSDTEIQREIGISNALHRLKLRLAIQEMVSLTSPSAPPTSRTSSGNVWVTHEEMETLATSTKTDSEEGSWAQTLAYGDMNHEWIGNEWLPSLGLPQYRSYFMECLVDARMLDHLTKKDLRVHLKMVDSFHRTSLQYGIMCLKRLNYDRKELEKRREESQHEIKDVLVWTNDQVVHWVQSIGLRDYAGNLHESGVHGALLALDENFDHNTLALVLQIPTQNTQARQVMEREFNNLLALGTDRKLDDGEEKVFRRAPSWRKRFRPRDHHSGGMLGTSAETLPAGFRVSTLGPLQPPPAPPNKIMPEAHSHYLYGHMLSAFRD</sequence>
<protein>
    <recommendedName>
        <fullName>Liprin-alpha-4</fullName>
    </recommendedName>
    <alternativeName>
        <fullName>Protein tyrosine phosphatase receptor type f polypeptide-interacting protein alpha-4</fullName>
        <shortName>PTPRF-interacting protein alpha-4</shortName>
    </alternativeName>
</protein>
<feature type="chain" id="PRO_0000191033" description="Liprin-alpha-4">
    <location>
        <begin position="1" status="less than"/>
        <end position="1043"/>
    </location>
</feature>
<feature type="domain" description="SAM 1" evidence="3">
    <location>
        <begin position="688"/>
        <end position="754"/>
    </location>
</feature>
<feature type="domain" description="SAM 2" evidence="3">
    <location>
        <begin position="803"/>
        <end position="867"/>
    </location>
</feature>
<feature type="domain" description="SAM 3" evidence="3">
    <location>
        <begin position="891"/>
        <end position="960"/>
    </location>
</feature>
<feature type="region of interest" description="Disordered" evidence="4">
    <location>
        <begin position="498"/>
        <end position="617"/>
    </location>
</feature>
<feature type="coiled-coil region" evidence="2">
    <location>
        <begin position="24"/>
        <end position="332"/>
    </location>
</feature>
<feature type="coiled-coil region" evidence="2">
    <location>
        <begin position="426"/>
        <end position="470"/>
    </location>
</feature>
<feature type="coiled-coil region" evidence="2">
    <location>
        <begin position="864"/>
        <end position="890"/>
    </location>
</feature>
<feature type="compositionally biased region" description="Polar residues" evidence="4">
    <location>
        <begin position="505"/>
        <end position="516"/>
    </location>
</feature>
<feature type="compositionally biased region" description="Basic and acidic residues" evidence="4">
    <location>
        <begin position="544"/>
        <end position="555"/>
    </location>
</feature>
<feature type="compositionally biased region" description="Low complexity" evidence="4">
    <location>
        <begin position="590"/>
        <end position="602"/>
    </location>
</feature>
<feature type="modified residue" description="Phosphoserine" evidence="10">
    <location>
        <position position="500"/>
    </location>
</feature>
<feature type="modified residue" description="Phosphoserine" evidence="10">
    <location>
        <position position="541"/>
    </location>
</feature>
<feature type="non-terminal residue">
    <location>
        <position position="1"/>
    </location>
</feature>
<accession>Q91Z80</accession>
<dbReference type="EMBL" id="AY057064">
    <property type="protein sequence ID" value="AAL23695.1"/>
    <property type="molecule type" value="mRNA"/>
</dbReference>
<dbReference type="RefSeq" id="NP_536334.1">
    <property type="nucleotide sequence ID" value="NM_080409.1"/>
</dbReference>
<dbReference type="SMR" id="Q91Z80"/>
<dbReference type="CORUM" id="Q91Z80"/>
<dbReference type="FunCoup" id="Q91Z80">
    <property type="interactions" value="937"/>
</dbReference>
<dbReference type="IntAct" id="Q91Z80">
    <property type="interactions" value="4"/>
</dbReference>
<dbReference type="MINT" id="Q91Z80"/>
<dbReference type="STRING" id="10116.ENSRNOP00000033209"/>
<dbReference type="iPTMnet" id="Q91Z80"/>
<dbReference type="PhosphoSitePlus" id="Q91Z80"/>
<dbReference type="SwissPalm" id="Q91Z80"/>
<dbReference type="PaxDb" id="10116-ENSRNOP00000033209"/>
<dbReference type="GeneID" id="140592"/>
<dbReference type="KEGG" id="rno:140592"/>
<dbReference type="UCSC" id="RGD:620055">
    <property type="organism name" value="rat"/>
</dbReference>
<dbReference type="AGR" id="RGD:620055"/>
<dbReference type="CTD" id="8497"/>
<dbReference type="RGD" id="620055">
    <property type="gene designation" value="Ppfia4"/>
</dbReference>
<dbReference type="eggNOG" id="KOG0249">
    <property type="taxonomic scope" value="Eukaryota"/>
</dbReference>
<dbReference type="InParanoid" id="Q91Z80"/>
<dbReference type="PhylomeDB" id="Q91Z80"/>
<dbReference type="Reactome" id="R-RNO-181429">
    <property type="pathway name" value="Serotonin Neurotransmitter Release Cycle"/>
</dbReference>
<dbReference type="Reactome" id="R-RNO-181430">
    <property type="pathway name" value="Norepinephrine Neurotransmitter Release Cycle"/>
</dbReference>
<dbReference type="Reactome" id="R-RNO-210500">
    <property type="pathway name" value="Glutamate Neurotransmitter Release Cycle"/>
</dbReference>
<dbReference type="Reactome" id="R-RNO-212676">
    <property type="pathway name" value="Dopamine Neurotransmitter Release Cycle"/>
</dbReference>
<dbReference type="Reactome" id="R-RNO-264642">
    <property type="pathway name" value="Acetylcholine Neurotransmitter Release Cycle"/>
</dbReference>
<dbReference type="Reactome" id="R-RNO-388844">
    <property type="pathway name" value="Receptor-type tyrosine-protein phosphatases"/>
</dbReference>
<dbReference type="Proteomes" id="UP000002494">
    <property type="component" value="Unplaced"/>
</dbReference>
<dbReference type="GO" id="GO:0009986">
    <property type="term" value="C:cell surface"/>
    <property type="evidence" value="ECO:0007669"/>
    <property type="project" value="UniProtKB-SubCell"/>
</dbReference>
<dbReference type="GO" id="GO:0005737">
    <property type="term" value="C:cytoplasm"/>
    <property type="evidence" value="ECO:0007669"/>
    <property type="project" value="UniProtKB-SubCell"/>
</dbReference>
<dbReference type="GO" id="GO:0098978">
    <property type="term" value="C:glutamatergic synapse"/>
    <property type="evidence" value="ECO:0000266"/>
    <property type="project" value="RGD"/>
</dbReference>
<dbReference type="GO" id="GO:0098688">
    <property type="term" value="C:parallel fiber to Purkinje cell synapse"/>
    <property type="evidence" value="ECO:0000266"/>
    <property type="project" value="RGD"/>
</dbReference>
<dbReference type="GO" id="GO:0098793">
    <property type="term" value="C:presynapse"/>
    <property type="evidence" value="ECO:0000266"/>
    <property type="project" value="RGD"/>
</dbReference>
<dbReference type="GO" id="GO:0048786">
    <property type="term" value="C:presynaptic active zone"/>
    <property type="evidence" value="ECO:0000318"/>
    <property type="project" value="GO_Central"/>
</dbReference>
<dbReference type="GO" id="GO:0045202">
    <property type="term" value="C:synapse"/>
    <property type="evidence" value="ECO:0000250"/>
    <property type="project" value="ParkinsonsUK-UCL"/>
</dbReference>
<dbReference type="GO" id="GO:0050808">
    <property type="term" value="P:synapse organization"/>
    <property type="evidence" value="ECO:0000318"/>
    <property type="project" value="GO_Central"/>
</dbReference>
<dbReference type="CDD" id="cd09562">
    <property type="entry name" value="SAM_liprin-alpha1_2_3_4_repeat1"/>
    <property type="match status" value="1"/>
</dbReference>
<dbReference type="CDD" id="cd09565">
    <property type="entry name" value="SAM_liprin-alpha1_2_3_4_repeat2"/>
    <property type="match status" value="1"/>
</dbReference>
<dbReference type="CDD" id="cd09568">
    <property type="entry name" value="SAM_liprin-alpha1_2_3_4_repeat3"/>
    <property type="match status" value="1"/>
</dbReference>
<dbReference type="FunFam" id="1.10.150.50:FF:000003">
    <property type="entry name" value="liprin-alpha-2 isoform X1"/>
    <property type="match status" value="1"/>
</dbReference>
<dbReference type="FunFam" id="1.10.150.50:FF:000002">
    <property type="entry name" value="PTPRF interacting protein alpha 1"/>
    <property type="match status" value="1"/>
</dbReference>
<dbReference type="FunFam" id="1.10.150.50:FF:000004">
    <property type="entry name" value="PTPRF interacting protein alpha 1"/>
    <property type="match status" value="1"/>
</dbReference>
<dbReference type="Gene3D" id="1.10.150.50">
    <property type="entry name" value="Transcription Factor, Ets-1"/>
    <property type="match status" value="3"/>
</dbReference>
<dbReference type="InterPro" id="IPR029515">
    <property type="entry name" value="Liprin"/>
</dbReference>
<dbReference type="InterPro" id="IPR037620">
    <property type="entry name" value="Liprin-alpha_SAM_rpt_1"/>
</dbReference>
<dbReference type="InterPro" id="IPR037621">
    <property type="entry name" value="Liprin-alpha_SAM_rpt_2"/>
</dbReference>
<dbReference type="InterPro" id="IPR037622">
    <property type="entry name" value="Liprin-alpha_SAM_rpt_3"/>
</dbReference>
<dbReference type="InterPro" id="IPR001660">
    <property type="entry name" value="SAM"/>
</dbReference>
<dbReference type="InterPro" id="IPR013761">
    <property type="entry name" value="SAM/pointed_sf"/>
</dbReference>
<dbReference type="PANTHER" id="PTHR12587">
    <property type="entry name" value="LAR INTERACTING PROTEIN LIP -RELATED PROTEIN"/>
    <property type="match status" value="1"/>
</dbReference>
<dbReference type="PANTHER" id="PTHR12587:SF5">
    <property type="entry name" value="LIPRIN-ALPHA-4"/>
    <property type="match status" value="1"/>
</dbReference>
<dbReference type="Pfam" id="PF00536">
    <property type="entry name" value="SAM_1"/>
    <property type="match status" value="2"/>
</dbReference>
<dbReference type="Pfam" id="PF07647">
    <property type="entry name" value="SAM_2"/>
    <property type="match status" value="1"/>
</dbReference>
<dbReference type="SMART" id="SM00454">
    <property type="entry name" value="SAM"/>
    <property type="match status" value="3"/>
</dbReference>
<dbReference type="SUPFAM" id="SSF47769">
    <property type="entry name" value="SAM/Pointed domain"/>
    <property type="match status" value="3"/>
</dbReference>
<dbReference type="PROSITE" id="PS50105">
    <property type="entry name" value="SAM_DOMAIN"/>
    <property type="match status" value="3"/>
</dbReference>
<name>LIPA4_RAT</name>
<organism>
    <name type="scientific">Rattus norvegicus</name>
    <name type="common">Rat</name>
    <dbReference type="NCBI Taxonomy" id="10116"/>
    <lineage>
        <taxon>Eukaryota</taxon>
        <taxon>Metazoa</taxon>
        <taxon>Chordata</taxon>
        <taxon>Craniata</taxon>
        <taxon>Vertebrata</taxon>
        <taxon>Euteleostomi</taxon>
        <taxon>Mammalia</taxon>
        <taxon>Eutheria</taxon>
        <taxon>Euarchontoglires</taxon>
        <taxon>Glires</taxon>
        <taxon>Rodentia</taxon>
        <taxon>Myomorpha</taxon>
        <taxon>Muroidea</taxon>
        <taxon>Muridae</taxon>
        <taxon>Murinae</taxon>
        <taxon>Rattus</taxon>
    </lineage>
</organism>
<gene>
    <name type="primary">Ppfia4</name>
</gene>
<comment type="function">
    <text evidence="1">May regulate the disassembly of focal adhesions. May localize receptor-like tyrosine phosphatases type 2A at specific sites on the plasma membrane, possibly regulating their interaction with the extracellular environment and their association with substrates (By similarity).</text>
</comment>
<comment type="subunit">
    <text evidence="5 6 7 8">Forms homodimers and heterodimers with liprins-alpha and liprins-beta. Interacts with the second PTPase domain of PTPRD, PTPRF and PTPRS. Interacts with RIMS1 and RIMS2 (PubMed:11797009). Interacts with GIT1 and GIT2 (PubMed:12629171). Interacts with GRIP1 (PubMed:11931740). Interacts with KIF1A (PubMed:12522103).</text>
</comment>
<comment type="interaction">
    <interactant intactId="EBI-8276907">
        <id>Q91Z80</id>
    </interactant>
    <interactant intactId="EBI-77718">
        <id>P19491</id>
        <label>Gria2</label>
    </interactant>
    <organismsDiffer>false</organismsDiffer>
    <experiments>3</experiments>
</comment>
<comment type="interaction">
    <interactant intactId="EBI-8276907">
        <id>Q91Z80</id>
    </interactant>
    <interactant intactId="EBI-936113">
        <id>P97879</id>
        <label>Grip1</label>
    </interactant>
    <organismsDiffer>false</organismsDiffer>
    <experiments>7</experiments>
</comment>
<comment type="interaction">
    <interactant intactId="EBI-8276907">
        <id>Q91Z80</id>
    </interactant>
    <interactant intactId="EBI-8277319">
        <id>Q9WUL3</id>
        <label>RPTPK</label>
    </interactant>
    <organismsDiffer>false</organismsDiffer>
    <experiments>2</experiments>
</comment>
<comment type="subcellular location">
    <subcellularLocation>
        <location evidence="1">Cytoplasm</location>
    </subcellularLocation>
    <subcellularLocation>
        <location evidence="1">Cell surface</location>
    </subcellularLocation>
    <text evidence="1">Colocalizes with PTPRF at the cell surface.</text>
</comment>
<comment type="domain">
    <text evidence="1">The N-terminal coiled coil regions mediate homodimerization preferentially and heterodimerization type alpha/alpha. The C-terminal, non-coiled coil regions mediate heterodimerization type alpha/beta and interaction with PTPRD, PTPRF and PTPRS (By similarity).</text>
</comment>
<comment type="similarity">
    <text evidence="9">Belongs to the liprin family. Liprin-alpha subfamily.</text>
</comment>
<evidence type="ECO:0000250" key="1"/>
<evidence type="ECO:0000255" key="2"/>
<evidence type="ECO:0000255" key="3">
    <source>
        <dbReference type="PROSITE-ProRule" id="PRU00184"/>
    </source>
</evidence>
<evidence type="ECO:0000256" key="4">
    <source>
        <dbReference type="SAM" id="MobiDB-lite"/>
    </source>
</evidence>
<evidence type="ECO:0000269" key="5">
    <source>
    </source>
</evidence>
<evidence type="ECO:0000269" key="6">
    <source>
    </source>
</evidence>
<evidence type="ECO:0000269" key="7">
    <source>
    </source>
</evidence>
<evidence type="ECO:0000269" key="8">
    <source>
    </source>
</evidence>
<evidence type="ECO:0000305" key="9"/>
<evidence type="ECO:0007744" key="10">
    <source>
    </source>
</evidence>
<proteinExistence type="evidence at protein level"/>